<comment type="function">
    <text evidence="1">Plays a role in the inhibition of host NF-kappa-B and IRF3 signaling pathways. Mechanistically, promotes the degradation of host IKBKG through enhancing its ubiquitination leading to inhibition of both pathways.</text>
</comment>
<comment type="induction">
    <text evidence="3">Expressed in the intermediate phase of the viral replicative cycle (immediately after DNA replication).</text>
</comment>
<comment type="similarity">
    <text evidence="4">Belongs to the asfivirus I226R family.</text>
</comment>
<accession>Q65250</accession>
<name>VF226_ASFM2</name>
<organismHost>
    <name type="scientific">Ornithodoros</name>
    <name type="common">relapsing fever ticks</name>
    <dbReference type="NCBI Taxonomy" id="6937"/>
</organismHost>
<organismHost>
    <name type="scientific">Phacochoerus aethiopicus</name>
    <name type="common">Warthog</name>
    <dbReference type="NCBI Taxonomy" id="85517"/>
</organismHost>
<organismHost>
    <name type="scientific">Phacochoerus africanus</name>
    <name type="common">Warthog</name>
    <dbReference type="NCBI Taxonomy" id="41426"/>
</organismHost>
<organismHost>
    <name type="scientific">Potamochoerus larvatus</name>
    <name type="common">Bushpig</name>
    <dbReference type="NCBI Taxonomy" id="273792"/>
</organismHost>
<organismHost>
    <name type="scientific">Sus scrofa</name>
    <name type="common">Pig</name>
    <dbReference type="NCBI Taxonomy" id="9823"/>
</organismHost>
<organism>
    <name type="scientific">African swine fever virus (isolate Tick/Malawi/Lil 20-1/1983)</name>
    <name type="common">ASFV</name>
    <dbReference type="NCBI Taxonomy" id="10500"/>
    <lineage>
        <taxon>Viruses</taxon>
        <taxon>Varidnaviria</taxon>
        <taxon>Bamfordvirae</taxon>
        <taxon>Nucleocytoviricota</taxon>
        <taxon>Pokkesviricetes</taxon>
        <taxon>Asfuvirales</taxon>
        <taxon>Asfarviridae</taxon>
        <taxon>Asfivirus</taxon>
        <taxon>African swine fever virus</taxon>
    </lineage>
</organism>
<gene>
    <name type="ordered locus">Mal-145</name>
    <name type="ORF">k8R</name>
</gene>
<proteinExistence type="inferred from homology"/>
<keyword id="KW-0325">Glycoprotein</keyword>
<keyword id="KW-0945">Host-virus interaction</keyword>
<keyword id="KW-1100">Inhibition of host NF-kappa-B by virus</keyword>
<keyword id="KW-0732">Signal</keyword>
<sequence>MKMETFLVCLFHNAKGLHQQIQEILYLLRMHIYETNLYLKQELSQLIYPNRQLSFVLLMPLSLLRNWDDIEYLTDIVDDKQTLHYAANLLTNYVLHLSMYQKLTKQYFLLAVKRVSEKLNKKQQHSFYEVLVTSEALNNYENLPKNILNTLMFAVRYVFNPTPNYSEILAELKKKNKIHHIIFNMVITDFQQIREQQMCKHLCETNNELRQECKEIIFDLKVVGNV</sequence>
<reference key="1">
    <citation type="journal article" date="1994" name="J. Gen. Virol.">
        <title>Nucleotide sequence of a 55 kbp region from the right end of the genome of a pathogenic African swine fever virus isolate (Malawi LIL20/1).</title>
        <authorList>
            <person name="Dixon L.K."/>
            <person name="Twigg S.R.F."/>
            <person name="Baylis S.A."/>
            <person name="Vydelingum S."/>
            <person name="Bristow C."/>
            <person name="Hammond J.M."/>
            <person name="Smith G.L."/>
        </authorList>
    </citation>
    <scope>NUCLEOTIDE SEQUENCE [GENOMIC DNA]</scope>
</reference>
<reference key="2">
    <citation type="submission" date="2003-03" db="EMBL/GenBank/DDBJ databases">
        <title>African swine fever virus genomes.</title>
        <authorList>
            <person name="Kutish G.F."/>
            <person name="Rock D.L."/>
        </authorList>
    </citation>
    <scope>NUCLEOTIDE SEQUENCE [LARGE SCALE GENOMIC DNA]</scope>
</reference>
<reference key="3">
    <citation type="journal article" date="2013" name="Virus Res.">
        <title>African swine fever virus transcription.</title>
        <authorList>
            <person name="Rodriguez J.M."/>
            <person name="Salas M.L."/>
        </authorList>
    </citation>
    <scope>REVIEW</scope>
</reference>
<feature type="signal peptide" evidence="2">
    <location>
        <begin position="1"/>
        <end position="16"/>
    </location>
</feature>
<feature type="chain" id="PRO_0000373592" description="Late protein I226R">
    <location>
        <begin position="17"/>
        <end position="226"/>
    </location>
</feature>
<feature type="glycosylation site" description="N-linked (GlcNAc...) asparagine; by host" evidence="2">
    <location>
        <position position="164"/>
    </location>
</feature>
<evidence type="ECO:0000250" key="1">
    <source>
        <dbReference type="UniProtKB" id="P27944"/>
    </source>
</evidence>
<evidence type="ECO:0000255" key="2"/>
<evidence type="ECO:0000303" key="3">
    <source>
    </source>
</evidence>
<evidence type="ECO:0000305" key="4"/>
<dbReference type="EMBL" id="X71982">
    <property type="protein sequence ID" value="CAA50846.1"/>
    <property type="molecule type" value="Genomic_DNA"/>
</dbReference>
<dbReference type="EMBL" id="AY261361">
    <property type="status" value="NOT_ANNOTATED_CDS"/>
    <property type="molecule type" value="Genomic_DNA"/>
</dbReference>
<dbReference type="Proteomes" id="UP000000860">
    <property type="component" value="Segment"/>
</dbReference>
<dbReference type="GO" id="GO:0085034">
    <property type="term" value="P:symbiont-mediated suppression of host NF-kappaB cascade"/>
    <property type="evidence" value="ECO:0007669"/>
    <property type="project" value="UniProtKB-KW"/>
</dbReference>
<protein>
    <recommendedName>
        <fullName>Late protein I226R</fullName>
        <shortName>pI226R</shortName>
    </recommendedName>
</protein>